<keyword id="KW-0007">Acetylation</keyword>
<keyword id="KW-0113">Calvin cycle</keyword>
<keyword id="KW-0120">Carbon dioxide fixation</keyword>
<keyword id="KW-0150">Chloroplast</keyword>
<keyword id="KW-0456">Lyase</keyword>
<keyword id="KW-0460">Magnesium</keyword>
<keyword id="KW-0479">Metal-binding</keyword>
<keyword id="KW-0488">Methylation</keyword>
<keyword id="KW-0503">Monooxygenase</keyword>
<keyword id="KW-0560">Oxidoreductase</keyword>
<keyword id="KW-0601">Photorespiration</keyword>
<keyword id="KW-0602">Photosynthesis</keyword>
<keyword id="KW-0934">Plastid</keyword>
<sequence>MVPQTETKAGAGFKAGVKDYRLTYYTPDYMVKDTDILAAFRMTPQPGVPPEECGAAVAAESSTGTWTTVWTDGLTSLDRYKGRCYDIEPVAGEDNQYIAYVAYPIDLFEEGSVTNLFTSIVGNVFGFKALRALRLEDLRIPPAYAKTFQGPPHGIQVERDKINKYGRGLLGCTIKPKLGLSAKNYGRAVYECLRGGLDFTKDDENVNSQPFMRWRDRFTFVAEAIYKSQAETGEIKGHYLNVTAATSEEMMKRAECAKDLGVPIIMHDYLTAGLTANTSLAHYCRDTGLLLHIHRAMHAVIDRQRNHGIHFRVLAKALRLSGGDHLHSGTVVGKLEGEREVTLGFVDLMRDDYIEKDRSRGIYFTQDWCSLPGVMPVASGGIHVWHMPALVEIFGDDACLQFGGGTLGHPWGNAPGAAANRVALEACTQARNAGVDLARKGGDVIRAACKWSPELAAACEVWKEIKFEFETIDKL</sequence>
<dbReference type="EC" id="4.1.1.39" evidence="1"/>
<dbReference type="EMBL" id="DQ630521">
    <property type="protein sequence ID" value="ABF60207.1"/>
    <property type="molecule type" value="Genomic_DNA"/>
</dbReference>
<dbReference type="RefSeq" id="YP_764383.1">
    <property type="nucleotide sequence ID" value="NC_008372.1"/>
</dbReference>
<dbReference type="SMR" id="Q06SI3"/>
<dbReference type="GeneID" id="4308347"/>
<dbReference type="GO" id="GO:0009507">
    <property type="term" value="C:chloroplast"/>
    <property type="evidence" value="ECO:0007669"/>
    <property type="project" value="UniProtKB-SubCell"/>
</dbReference>
<dbReference type="GO" id="GO:0000287">
    <property type="term" value="F:magnesium ion binding"/>
    <property type="evidence" value="ECO:0007669"/>
    <property type="project" value="UniProtKB-UniRule"/>
</dbReference>
<dbReference type="GO" id="GO:0004497">
    <property type="term" value="F:monooxygenase activity"/>
    <property type="evidence" value="ECO:0007669"/>
    <property type="project" value="UniProtKB-KW"/>
</dbReference>
<dbReference type="GO" id="GO:0016984">
    <property type="term" value="F:ribulose-bisphosphate carboxylase activity"/>
    <property type="evidence" value="ECO:0007669"/>
    <property type="project" value="UniProtKB-UniRule"/>
</dbReference>
<dbReference type="GO" id="GO:0009853">
    <property type="term" value="P:photorespiration"/>
    <property type="evidence" value="ECO:0007669"/>
    <property type="project" value="UniProtKB-KW"/>
</dbReference>
<dbReference type="GO" id="GO:0019253">
    <property type="term" value="P:reductive pentose-phosphate cycle"/>
    <property type="evidence" value="ECO:0007669"/>
    <property type="project" value="UniProtKB-UniRule"/>
</dbReference>
<dbReference type="CDD" id="cd08212">
    <property type="entry name" value="RuBisCO_large_I"/>
    <property type="match status" value="1"/>
</dbReference>
<dbReference type="FunFam" id="3.30.70.150:FF:000001">
    <property type="entry name" value="Ribulose bisphosphate carboxylase large chain"/>
    <property type="match status" value="1"/>
</dbReference>
<dbReference type="Gene3D" id="3.20.20.110">
    <property type="entry name" value="Ribulose bisphosphate carboxylase, large subunit, C-terminal domain"/>
    <property type="match status" value="1"/>
</dbReference>
<dbReference type="Gene3D" id="3.30.70.150">
    <property type="entry name" value="RuBisCO large subunit, N-terminal domain"/>
    <property type="match status" value="1"/>
</dbReference>
<dbReference type="HAMAP" id="MF_01338">
    <property type="entry name" value="RuBisCO_L_type1"/>
    <property type="match status" value="1"/>
</dbReference>
<dbReference type="InterPro" id="IPR033966">
    <property type="entry name" value="RuBisCO"/>
</dbReference>
<dbReference type="InterPro" id="IPR020878">
    <property type="entry name" value="RuBisCo_large_chain_AS"/>
</dbReference>
<dbReference type="InterPro" id="IPR000685">
    <property type="entry name" value="RuBisCO_lsu_C"/>
</dbReference>
<dbReference type="InterPro" id="IPR036376">
    <property type="entry name" value="RuBisCO_lsu_C_sf"/>
</dbReference>
<dbReference type="InterPro" id="IPR017443">
    <property type="entry name" value="RuBisCO_lsu_fd_N"/>
</dbReference>
<dbReference type="InterPro" id="IPR036422">
    <property type="entry name" value="RuBisCO_lsu_N_sf"/>
</dbReference>
<dbReference type="InterPro" id="IPR020888">
    <property type="entry name" value="RuBisCO_lsuI"/>
</dbReference>
<dbReference type="NCBIfam" id="NF003252">
    <property type="entry name" value="PRK04208.1"/>
    <property type="match status" value="1"/>
</dbReference>
<dbReference type="PANTHER" id="PTHR42704">
    <property type="entry name" value="RIBULOSE BISPHOSPHATE CARBOXYLASE"/>
    <property type="match status" value="1"/>
</dbReference>
<dbReference type="PANTHER" id="PTHR42704:SF17">
    <property type="entry name" value="RIBULOSE BISPHOSPHATE CARBOXYLASE LARGE CHAIN"/>
    <property type="match status" value="1"/>
</dbReference>
<dbReference type="Pfam" id="PF00016">
    <property type="entry name" value="RuBisCO_large"/>
    <property type="match status" value="1"/>
</dbReference>
<dbReference type="Pfam" id="PF02788">
    <property type="entry name" value="RuBisCO_large_N"/>
    <property type="match status" value="1"/>
</dbReference>
<dbReference type="SFLD" id="SFLDG01052">
    <property type="entry name" value="RuBisCO"/>
    <property type="match status" value="1"/>
</dbReference>
<dbReference type="SFLD" id="SFLDS00014">
    <property type="entry name" value="RuBisCO"/>
    <property type="match status" value="1"/>
</dbReference>
<dbReference type="SFLD" id="SFLDG00301">
    <property type="entry name" value="RuBisCO-like_proteins"/>
    <property type="match status" value="1"/>
</dbReference>
<dbReference type="SUPFAM" id="SSF51649">
    <property type="entry name" value="RuBisCo, C-terminal domain"/>
    <property type="match status" value="1"/>
</dbReference>
<dbReference type="SUPFAM" id="SSF54966">
    <property type="entry name" value="RuBisCO, large subunit, small (N-terminal) domain"/>
    <property type="match status" value="1"/>
</dbReference>
<dbReference type="PROSITE" id="PS00157">
    <property type="entry name" value="RUBISCO_LARGE"/>
    <property type="match status" value="1"/>
</dbReference>
<feature type="propeptide" id="PRO_0000275371" evidence="1">
    <location>
        <begin position="1"/>
        <end position="2"/>
    </location>
</feature>
<feature type="chain" id="PRO_0000275372" description="Ribulose bisphosphate carboxylase large chain">
    <location>
        <begin position="3"/>
        <end position="475"/>
    </location>
</feature>
<feature type="active site" description="Proton acceptor" evidence="1">
    <location>
        <position position="175"/>
    </location>
</feature>
<feature type="active site" description="Proton acceptor" evidence="1">
    <location>
        <position position="294"/>
    </location>
</feature>
<feature type="binding site" description="in homodimeric partner" evidence="1">
    <location>
        <position position="123"/>
    </location>
    <ligand>
        <name>substrate</name>
    </ligand>
</feature>
<feature type="binding site" evidence="1">
    <location>
        <position position="173"/>
    </location>
    <ligand>
        <name>substrate</name>
    </ligand>
</feature>
<feature type="binding site" evidence="1">
    <location>
        <position position="177"/>
    </location>
    <ligand>
        <name>substrate</name>
    </ligand>
</feature>
<feature type="binding site" description="via carbamate group" evidence="1">
    <location>
        <position position="201"/>
    </location>
    <ligand>
        <name>Mg(2+)</name>
        <dbReference type="ChEBI" id="CHEBI:18420"/>
    </ligand>
</feature>
<feature type="binding site" evidence="1">
    <location>
        <position position="203"/>
    </location>
    <ligand>
        <name>Mg(2+)</name>
        <dbReference type="ChEBI" id="CHEBI:18420"/>
    </ligand>
</feature>
<feature type="binding site" evidence="1">
    <location>
        <position position="204"/>
    </location>
    <ligand>
        <name>Mg(2+)</name>
        <dbReference type="ChEBI" id="CHEBI:18420"/>
    </ligand>
</feature>
<feature type="binding site" evidence="1">
    <location>
        <position position="295"/>
    </location>
    <ligand>
        <name>substrate</name>
    </ligand>
</feature>
<feature type="binding site" evidence="1">
    <location>
        <position position="327"/>
    </location>
    <ligand>
        <name>substrate</name>
    </ligand>
</feature>
<feature type="binding site" evidence="1">
    <location>
        <position position="379"/>
    </location>
    <ligand>
        <name>substrate</name>
    </ligand>
</feature>
<feature type="site" description="Transition state stabilizer" evidence="1">
    <location>
        <position position="334"/>
    </location>
</feature>
<feature type="modified residue" description="N-acetylproline" evidence="1">
    <location>
        <position position="3"/>
    </location>
</feature>
<feature type="modified residue" description="N6,N6,N6-trimethyllysine" evidence="1">
    <location>
        <position position="14"/>
    </location>
</feature>
<feature type="modified residue" description="N6-carboxylysine" evidence="1">
    <location>
        <position position="201"/>
    </location>
</feature>
<accession>Q06SI3</accession>
<organism>
    <name type="scientific">Stigeoclonium helveticum</name>
    <name type="common">Green alga</name>
    <dbReference type="NCBI Taxonomy" id="55999"/>
    <lineage>
        <taxon>Eukaryota</taxon>
        <taxon>Viridiplantae</taxon>
        <taxon>Chlorophyta</taxon>
        <taxon>core chlorophytes</taxon>
        <taxon>Chlorophyceae</taxon>
        <taxon>OCC clade</taxon>
        <taxon>Chaetophorales</taxon>
        <taxon>Chaetophoraceae</taxon>
        <taxon>Stigeoclonium</taxon>
    </lineage>
</organism>
<geneLocation type="chloroplast"/>
<name>RBL_STIHE</name>
<evidence type="ECO:0000255" key="1">
    <source>
        <dbReference type="HAMAP-Rule" id="MF_01338"/>
    </source>
</evidence>
<protein>
    <recommendedName>
        <fullName evidence="1">Ribulose bisphosphate carboxylase large chain</fullName>
        <shortName evidence="1">RuBisCO large subunit</shortName>
        <ecNumber evidence="1">4.1.1.39</ecNumber>
    </recommendedName>
</protein>
<comment type="function">
    <text evidence="1">RuBisCO catalyzes two reactions: the carboxylation of D-ribulose 1,5-bisphosphate, the primary event in carbon dioxide fixation, as well as the oxidative fragmentation of the pentose substrate in the photorespiration process. Both reactions occur simultaneously and in competition at the same active site.</text>
</comment>
<comment type="catalytic activity">
    <reaction evidence="1">
        <text>2 (2R)-3-phosphoglycerate + 2 H(+) = D-ribulose 1,5-bisphosphate + CO2 + H2O</text>
        <dbReference type="Rhea" id="RHEA:23124"/>
        <dbReference type="ChEBI" id="CHEBI:15377"/>
        <dbReference type="ChEBI" id="CHEBI:15378"/>
        <dbReference type="ChEBI" id="CHEBI:16526"/>
        <dbReference type="ChEBI" id="CHEBI:57870"/>
        <dbReference type="ChEBI" id="CHEBI:58272"/>
        <dbReference type="EC" id="4.1.1.39"/>
    </reaction>
</comment>
<comment type="catalytic activity">
    <reaction evidence="1">
        <text>D-ribulose 1,5-bisphosphate + O2 = 2-phosphoglycolate + (2R)-3-phosphoglycerate + 2 H(+)</text>
        <dbReference type="Rhea" id="RHEA:36631"/>
        <dbReference type="ChEBI" id="CHEBI:15378"/>
        <dbReference type="ChEBI" id="CHEBI:15379"/>
        <dbReference type="ChEBI" id="CHEBI:57870"/>
        <dbReference type="ChEBI" id="CHEBI:58033"/>
        <dbReference type="ChEBI" id="CHEBI:58272"/>
    </reaction>
</comment>
<comment type="cofactor">
    <cofactor evidence="1">
        <name>Mg(2+)</name>
        <dbReference type="ChEBI" id="CHEBI:18420"/>
    </cofactor>
    <text evidence="1">Binds 1 Mg(2+) ion per subunit.</text>
</comment>
<comment type="subunit">
    <text evidence="1">Heterohexadecamer of 8 large chains and 8 small chains.</text>
</comment>
<comment type="subcellular location">
    <subcellularLocation>
        <location>Plastid</location>
        <location>Chloroplast</location>
    </subcellularLocation>
</comment>
<comment type="miscellaneous">
    <text evidence="1">The basic functional RuBisCO is composed of a large chain homodimer in a 'head-to-tail' conformation. In form I RuBisCO this homodimer is arranged in a barrel-like tetramer with the small subunits forming a tetrameric 'cap' on each end of the 'barrel'.</text>
</comment>
<comment type="similarity">
    <text evidence="1">Belongs to the RuBisCO large chain family. Type I subfamily.</text>
</comment>
<reference key="1">
    <citation type="journal article" date="2006" name="Mol. Genet. Genomics">
        <title>Distinctive architecture of the chloroplast genome in the chlorophycean green alga Stigeoclonium helveticum.</title>
        <authorList>
            <person name="Belanger A.-S."/>
            <person name="Brouard J.-S."/>
            <person name="Charlebois P."/>
            <person name="Otis C."/>
            <person name="Lemieux C."/>
            <person name="Turmel M."/>
        </authorList>
    </citation>
    <scope>NUCLEOTIDE SEQUENCE [LARGE SCALE GENOMIC DNA]</scope>
    <source>
        <strain>UTEX 441</strain>
    </source>
</reference>
<gene>
    <name evidence="1" type="primary">rbcL</name>
</gene>
<proteinExistence type="inferred from homology"/>